<sequence length="46" mass="5467">MKVLNSLRTAKERHPDCQIVKRKGRLYVICKSNPRFKAVQGRKKKR</sequence>
<keyword id="KW-1185">Reference proteome</keyword>
<keyword id="KW-0687">Ribonucleoprotein</keyword>
<keyword id="KW-0689">Ribosomal protein</keyword>
<feature type="chain" id="PRO_0000344677" description="Large ribosomal subunit protein bL36B">
    <location>
        <begin position="1"/>
        <end position="46"/>
    </location>
</feature>
<protein>
    <recommendedName>
        <fullName evidence="1">Large ribosomal subunit protein bL36B</fullName>
    </recommendedName>
    <alternativeName>
        <fullName evidence="2">50S ribosomal protein L36 2</fullName>
    </alternativeName>
</protein>
<proteinExistence type="inferred from homology"/>
<dbReference type="EMBL" id="CP000800">
    <property type="protein sequence ID" value="ABV18981.1"/>
    <property type="molecule type" value="Genomic_DNA"/>
</dbReference>
<dbReference type="SMR" id="A7ZI30"/>
<dbReference type="KEGG" id="ecw:EcE24377A_0306"/>
<dbReference type="HOGENOM" id="CLU_135723_3_1_6"/>
<dbReference type="Proteomes" id="UP000001122">
    <property type="component" value="Chromosome"/>
</dbReference>
<dbReference type="GO" id="GO:1990904">
    <property type="term" value="C:ribonucleoprotein complex"/>
    <property type="evidence" value="ECO:0007669"/>
    <property type="project" value="UniProtKB-KW"/>
</dbReference>
<dbReference type="GO" id="GO:0005840">
    <property type="term" value="C:ribosome"/>
    <property type="evidence" value="ECO:0007669"/>
    <property type="project" value="UniProtKB-KW"/>
</dbReference>
<dbReference type="GO" id="GO:0003735">
    <property type="term" value="F:structural constituent of ribosome"/>
    <property type="evidence" value="ECO:0007669"/>
    <property type="project" value="InterPro"/>
</dbReference>
<dbReference type="GO" id="GO:0006412">
    <property type="term" value="P:translation"/>
    <property type="evidence" value="ECO:0007669"/>
    <property type="project" value="UniProtKB-UniRule"/>
</dbReference>
<dbReference type="HAMAP" id="MF_00251">
    <property type="entry name" value="Ribosomal_bL36"/>
    <property type="match status" value="1"/>
</dbReference>
<dbReference type="InterPro" id="IPR000473">
    <property type="entry name" value="Ribosomal_bL36"/>
</dbReference>
<dbReference type="InterPro" id="IPR035977">
    <property type="entry name" value="Ribosomal_bL36_sp"/>
</dbReference>
<dbReference type="InterPro" id="IPR047621">
    <property type="entry name" value="Ribosomal_L36_bact"/>
</dbReference>
<dbReference type="NCBIfam" id="NF002021">
    <property type="entry name" value="PRK00831.1"/>
    <property type="match status" value="1"/>
</dbReference>
<dbReference type="NCBIfam" id="TIGR01022">
    <property type="entry name" value="rpmJ_bact"/>
    <property type="match status" value="1"/>
</dbReference>
<dbReference type="PANTHER" id="PTHR47781">
    <property type="entry name" value="50S RIBOSOMAL PROTEIN L36 2"/>
    <property type="match status" value="1"/>
</dbReference>
<dbReference type="PANTHER" id="PTHR47781:SF1">
    <property type="entry name" value="LARGE RIBOSOMAL SUBUNIT PROTEIN BL36B"/>
    <property type="match status" value="1"/>
</dbReference>
<dbReference type="Pfam" id="PF00444">
    <property type="entry name" value="Ribosomal_L36"/>
    <property type="match status" value="1"/>
</dbReference>
<dbReference type="SUPFAM" id="SSF57840">
    <property type="entry name" value="Ribosomal protein L36"/>
    <property type="match status" value="1"/>
</dbReference>
<dbReference type="PROSITE" id="PS00828">
    <property type="entry name" value="RIBOSOMAL_L36"/>
    <property type="match status" value="1"/>
</dbReference>
<accession>A7ZI30</accession>
<evidence type="ECO:0000255" key="1">
    <source>
        <dbReference type="HAMAP-Rule" id="MF_00251"/>
    </source>
</evidence>
<evidence type="ECO:0000305" key="2"/>
<gene>
    <name evidence="1" type="primary">rpmJ2</name>
    <name type="ordered locus">EcE24377A_0306</name>
</gene>
<comment type="similarity">
    <text evidence="1">Belongs to the bacterial ribosomal protein bL36 family.</text>
</comment>
<name>RL362_ECO24</name>
<reference key="1">
    <citation type="journal article" date="2008" name="J. Bacteriol.">
        <title>The pangenome structure of Escherichia coli: comparative genomic analysis of E. coli commensal and pathogenic isolates.</title>
        <authorList>
            <person name="Rasko D.A."/>
            <person name="Rosovitz M.J."/>
            <person name="Myers G.S.A."/>
            <person name="Mongodin E.F."/>
            <person name="Fricke W.F."/>
            <person name="Gajer P."/>
            <person name="Crabtree J."/>
            <person name="Sebaihia M."/>
            <person name="Thomson N.R."/>
            <person name="Chaudhuri R."/>
            <person name="Henderson I.R."/>
            <person name="Sperandio V."/>
            <person name="Ravel J."/>
        </authorList>
    </citation>
    <scope>NUCLEOTIDE SEQUENCE [LARGE SCALE GENOMIC DNA]</scope>
    <source>
        <strain>E24377A / ETEC</strain>
    </source>
</reference>
<organism>
    <name type="scientific">Escherichia coli O139:H28 (strain E24377A / ETEC)</name>
    <dbReference type="NCBI Taxonomy" id="331111"/>
    <lineage>
        <taxon>Bacteria</taxon>
        <taxon>Pseudomonadati</taxon>
        <taxon>Pseudomonadota</taxon>
        <taxon>Gammaproteobacteria</taxon>
        <taxon>Enterobacterales</taxon>
        <taxon>Enterobacteriaceae</taxon>
        <taxon>Escherichia</taxon>
    </lineage>
</organism>